<protein>
    <recommendedName>
        <fullName evidence="1">Chaperone protein DnaK</fullName>
    </recommendedName>
    <alternativeName>
        <fullName evidence="1">HSP70</fullName>
    </alternativeName>
    <alternativeName>
        <fullName evidence="1">Heat shock 70 kDa protein</fullName>
    </alternativeName>
    <alternativeName>
        <fullName evidence="1">Heat shock protein 70</fullName>
    </alternativeName>
</protein>
<feature type="chain" id="PRO_1000059501" description="Chaperone protein DnaK">
    <location>
        <begin position="1"/>
        <end position="642"/>
    </location>
</feature>
<feature type="region of interest" description="Disordered" evidence="2">
    <location>
        <begin position="601"/>
        <end position="642"/>
    </location>
</feature>
<feature type="compositionally biased region" description="Low complexity" evidence="2">
    <location>
        <begin position="602"/>
        <end position="623"/>
    </location>
</feature>
<feature type="compositionally biased region" description="Acidic residues" evidence="2">
    <location>
        <begin position="628"/>
        <end position="642"/>
    </location>
</feature>
<feature type="modified residue" description="Phosphothreonine; by autocatalysis" evidence="1">
    <location>
        <position position="199"/>
    </location>
</feature>
<accession>A0KMI6</accession>
<dbReference type="EMBL" id="CP000462">
    <property type="protein sequence ID" value="ABK38561.1"/>
    <property type="molecule type" value="Genomic_DNA"/>
</dbReference>
<dbReference type="RefSeq" id="WP_011706781.1">
    <property type="nucleotide sequence ID" value="NC_008570.1"/>
</dbReference>
<dbReference type="RefSeq" id="YP_857487.1">
    <property type="nucleotide sequence ID" value="NC_008570.1"/>
</dbReference>
<dbReference type="SMR" id="A0KMI6"/>
<dbReference type="STRING" id="380703.AHA_2983"/>
<dbReference type="EnsemblBacteria" id="ABK38561">
    <property type="protein sequence ID" value="ABK38561"/>
    <property type="gene ID" value="AHA_2983"/>
</dbReference>
<dbReference type="GeneID" id="4488919"/>
<dbReference type="KEGG" id="aha:AHA_2983"/>
<dbReference type="PATRIC" id="fig|380703.7.peg.2982"/>
<dbReference type="eggNOG" id="COG0443">
    <property type="taxonomic scope" value="Bacteria"/>
</dbReference>
<dbReference type="HOGENOM" id="CLU_005965_2_1_6"/>
<dbReference type="OrthoDB" id="9766019at2"/>
<dbReference type="Proteomes" id="UP000000756">
    <property type="component" value="Chromosome"/>
</dbReference>
<dbReference type="GO" id="GO:0005524">
    <property type="term" value="F:ATP binding"/>
    <property type="evidence" value="ECO:0007669"/>
    <property type="project" value="UniProtKB-UniRule"/>
</dbReference>
<dbReference type="GO" id="GO:0140662">
    <property type="term" value="F:ATP-dependent protein folding chaperone"/>
    <property type="evidence" value="ECO:0007669"/>
    <property type="project" value="InterPro"/>
</dbReference>
<dbReference type="GO" id="GO:0051082">
    <property type="term" value="F:unfolded protein binding"/>
    <property type="evidence" value="ECO:0007669"/>
    <property type="project" value="InterPro"/>
</dbReference>
<dbReference type="CDD" id="cd10234">
    <property type="entry name" value="ASKHA_NBD_HSP70_DnaK-like"/>
    <property type="match status" value="1"/>
</dbReference>
<dbReference type="FunFam" id="2.60.34.10:FF:000014">
    <property type="entry name" value="Chaperone protein DnaK HSP70"/>
    <property type="match status" value="1"/>
</dbReference>
<dbReference type="FunFam" id="3.30.30.30:FF:000003">
    <property type="entry name" value="Heat shock protein 9"/>
    <property type="match status" value="1"/>
</dbReference>
<dbReference type="FunFam" id="1.20.1270.10:FF:000001">
    <property type="entry name" value="Molecular chaperone DnaK"/>
    <property type="match status" value="1"/>
</dbReference>
<dbReference type="FunFam" id="3.30.420.40:FF:000004">
    <property type="entry name" value="Molecular chaperone DnaK"/>
    <property type="match status" value="1"/>
</dbReference>
<dbReference type="FunFam" id="3.90.640.10:FF:000003">
    <property type="entry name" value="Molecular chaperone DnaK"/>
    <property type="match status" value="1"/>
</dbReference>
<dbReference type="Gene3D" id="1.20.1270.10">
    <property type="match status" value="1"/>
</dbReference>
<dbReference type="Gene3D" id="3.30.420.40">
    <property type="match status" value="2"/>
</dbReference>
<dbReference type="Gene3D" id="3.90.640.10">
    <property type="entry name" value="Actin, Chain A, domain 4"/>
    <property type="match status" value="1"/>
</dbReference>
<dbReference type="Gene3D" id="2.60.34.10">
    <property type="entry name" value="Substrate Binding Domain Of DNAk, Chain A, domain 1"/>
    <property type="match status" value="1"/>
</dbReference>
<dbReference type="HAMAP" id="MF_00332">
    <property type="entry name" value="DnaK"/>
    <property type="match status" value="1"/>
</dbReference>
<dbReference type="InterPro" id="IPR043129">
    <property type="entry name" value="ATPase_NBD"/>
</dbReference>
<dbReference type="InterPro" id="IPR012725">
    <property type="entry name" value="Chaperone_DnaK"/>
</dbReference>
<dbReference type="InterPro" id="IPR018181">
    <property type="entry name" value="Heat_shock_70_CS"/>
</dbReference>
<dbReference type="InterPro" id="IPR029048">
    <property type="entry name" value="HSP70_C_sf"/>
</dbReference>
<dbReference type="InterPro" id="IPR029047">
    <property type="entry name" value="HSP70_peptide-bd_sf"/>
</dbReference>
<dbReference type="InterPro" id="IPR013126">
    <property type="entry name" value="Hsp_70_fam"/>
</dbReference>
<dbReference type="NCBIfam" id="NF001413">
    <property type="entry name" value="PRK00290.1"/>
    <property type="match status" value="1"/>
</dbReference>
<dbReference type="NCBIfam" id="NF003520">
    <property type="entry name" value="PRK05183.1"/>
    <property type="match status" value="1"/>
</dbReference>
<dbReference type="NCBIfam" id="TIGR02350">
    <property type="entry name" value="prok_dnaK"/>
    <property type="match status" value="1"/>
</dbReference>
<dbReference type="PANTHER" id="PTHR19375">
    <property type="entry name" value="HEAT SHOCK PROTEIN 70KDA"/>
    <property type="match status" value="1"/>
</dbReference>
<dbReference type="Pfam" id="PF00012">
    <property type="entry name" value="HSP70"/>
    <property type="match status" value="1"/>
</dbReference>
<dbReference type="PRINTS" id="PR00301">
    <property type="entry name" value="HEATSHOCK70"/>
</dbReference>
<dbReference type="SUPFAM" id="SSF53067">
    <property type="entry name" value="Actin-like ATPase domain"/>
    <property type="match status" value="2"/>
</dbReference>
<dbReference type="SUPFAM" id="SSF100934">
    <property type="entry name" value="Heat shock protein 70kD (HSP70), C-terminal subdomain"/>
    <property type="match status" value="1"/>
</dbReference>
<dbReference type="SUPFAM" id="SSF100920">
    <property type="entry name" value="Heat shock protein 70kD (HSP70), peptide-binding domain"/>
    <property type="match status" value="1"/>
</dbReference>
<dbReference type="PROSITE" id="PS00297">
    <property type="entry name" value="HSP70_1"/>
    <property type="match status" value="1"/>
</dbReference>
<dbReference type="PROSITE" id="PS00329">
    <property type="entry name" value="HSP70_2"/>
    <property type="match status" value="1"/>
</dbReference>
<dbReference type="PROSITE" id="PS01036">
    <property type="entry name" value="HSP70_3"/>
    <property type="match status" value="1"/>
</dbReference>
<gene>
    <name evidence="1" type="primary">dnaK</name>
    <name type="ordered locus">AHA_2983</name>
</gene>
<organism>
    <name type="scientific">Aeromonas hydrophila subsp. hydrophila (strain ATCC 7966 / DSM 30187 / BCRC 13018 / CCUG 14551 / JCM 1027 / KCTC 2358 / NCIMB 9240 / NCTC 8049)</name>
    <dbReference type="NCBI Taxonomy" id="380703"/>
    <lineage>
        <taxon>Bacteria</taxon>
        <taxon>Pseudomonadati</taxon>
        <taxon>Pseudomonadota</taxon>
        <taxon>Gammaproteobacteria</taxon>
        <taxon>Aeromonadales</taxon>
        <taxon>Aeromonadaceae</taxon>
        <taxon>Aeromonas</taxon>
    </lineage>
</organism>
<reference key="1">
    <citation type="journal article" date="2006" name="J. Bacteriol.">
        <title>Genome sequence of Aeromonas hydrophila ATCC 7966T: jack of all trades.</title>
        <authorList>
            <person name="Seshadri R."/>
            <person name="Joseph S.W."/>
            <person name="Chopra A.K."/>
            <person name="Sha J."/>
            <person name="Shaw J."/>
            <person name="Graf J."/>
            <person name="Haft D.H."/>
            <person name="Wu M."/>
            <person name="Ren Q."/>
            <person name="Rosovitz M.J."/>
            <person name="Madupu R."/>
            <person name="Tallon L."/>
            <person name="Kim M."/>
            <person name="Jin S."/>
            <person name="Vuong H."/>
            <person name="Stine O.C."/>
            <person name="Ali A."/>
            <person name="Horneman A.J."/>
            <person name="Heidelberg J.F."/>
        </authorList>
    </citation>
    <scope>NUCLEOTIDE SEQUENCE [LARGE SCALE GENOMIC DNA]</scope>
    <source>
        <strain>ATCC 7966 / DSM 30187 / BCRC 13018 / CCUG 14551 / JCM 1027 / KCTC 2358 / NCIMB 9240 / NCTC 8049</strain>
    </source>
</reference>
<keyword id="KW-0067">ATP-binding</keyword>
<keyword id="KW-0143">Chaperone</keyword>
<keyword id="KW-0547">Nucleotide-binding</keyword>
<keyword id="KW-0597">Phosphoprotein</keyword>
<keyword id="KW-1185">Reference proteome</keyword>
<keyword id="KW-0346">Stress response</keyword>
<name>DNAK_AERHH</name>
<evidence type="ECO:0000255" key="1">
    <source>
        <dbReference type="HAMAP-Rule" id="MF_00332"/>
    </source>
</evidence>
<evidence type="ECO:0000256" key="2">
    <source>
        <dbReference type="SAM" id="MobiDB-lite"/>
    </source>
</evidence>
<proteinExistence type="inferred from homology"/>
<comment type="function">
    <text evidence="1">Acts as a chaperone.</text>
</comment>
<comment type="induction">
    <text evidence="1">By stress conditions e.g. heat shock.</text>
</comment>
<comment type="similarity">
    <text evidence="1">Belongs to the heat shock protein 70 family.</text>
</comment>
<sequence length="642" mass="69429">MGKIIGIDLGTTNSCVAILDGDHARVIENAEGDRTTPSIIAYADDGEILVGQPAKRQAITNPKNTLFAIKRLIGRRFEDDEVQRDLEIMPYAIAKADNGDAWVEVKGKKMAPPQISAEVLKKMKKTAEDYLGEPVTEAVITVPAYFNDAQRQATKDAGRIAGLDVKRIINEPTAAAFAYGVNKVKGERKVAVYDLGGGTFDISIIEIDEVEGETTFEVLATNGNTHLGGEDFDNRVINYLVEEFKREQGIDLRKDQLALQRLKDAAEKAKIELSSAQQTDVNLPYITADATGPKHMNIKVTRAKLESLVEDMVKDSLEPVRVALKDSGLAVGEIDDVILVGGQTRMPMVQKAVADFFGKEPRKDVNPDEAVAMGAAIQGAVLSGDKTDVLLLDVTPLSLGIETMGSVMTALIEKNTTIPTKKSQVFSTAEDNQSAVTIHVLQGERKRASDNKSLGQFNLEGIRPAPRGLPQIEVTFDIDANGILHVSAKDKETNKEQKITIQASSGLSDDEIERMVREAEANAAEDKKFEELVQTRNQADGLVHSVRKQITEAGEALPADDKTKIEAALSELESAIKGDDKAAIEAKQQALLEASQKLMEIAQQQAQAQGAAGADAGQSSSSAKADDDVVDAEFEEVKDDKK</sequence>